<sequence>MASTATCTRFTDEYQLFEELGKGAFSVVRRCMKITTGQEYAAKIINTKKLSARDHQKLEREARICRLLKHPNIVRLHDSISEEGFHYLVFDLVTGGELFEDIVAREYYSEADASHCIQQILESVNHCHLNGIVHRDLKPENLLLASKSKGAAVKLADFGLAIEVQGEQQAWFGFAGTPGYLSPEVLRKDPYGKPVDMWACGVILYILLVGYPPFWDEDQHRLYQQIKAGAYDFPSPEWDTVTPEAKDLINKMLTINPAKRITASEALKHPWICQRSTVASMMHRQETVDCLKKFNARRKLKGAILTTMLATRNFSAAKSLLKKPDGVKESTESSNTTIEDEDVKARKQEIIKVTEQLIEAINNGDFEAYTKICDPGLTSFEPEALGNLVEGMDFHRFYFENALSKSNKPIHTIILNPHVHLVGDDAACIAYIRLTQYMDGTGMPKTMQSEETRVWHRRDGKWQNVHFHRSGSPTVPINA</sequence>
<gene>
    <name type="primary">CAMK2D</name>
    <name type="ORF">RCJMB04_10k21</name>
</gene>
<proteinExistence type="evidence at transcript level"/>
<keyword id="KW-0067">ATP-binding</keyword>
<keyword id="KW-0112">Calmodulin-binding</keyword>
<keyword id="KW-0418">Kinase</keyword>
<keyword id="KW-0547">Nucleotide-binding</keyword>
<keyword id="KW-0597">Phosphoprotein</keyword>
<keyword id="KW-1185">Reference proteome</keyword>
<keyword id="KW-0723">Serine/threonine-protein kinase</keyword>
<keyword id="KW-0808">Transferase</keyword>
<organism>
    <name type="scientific">Gallus gallus</name>
    <name type="common">Chicken</name>
    <dbReference type="NCBI Taxonomy" id="9031"/>
    <lineage>
        <taxon>Eukaryota</taxon>
        <taxon>Metazoa</taxon>
        <taxon>Chordata</taxon>
        <taxon>Craniata</taxon>
        <taxon>Vertebrata</taxon>
        <taxon>Euteleostomi</taxon>
        <taxon>Archelosauria</taxon>
        <taxon>Archosauria</taxon>
        <taxon>Dinosauria</taxon>
        <taxon>Saurischia</taxon>
        <taxon>Theropoda</taxon>
        <taxon>Coelurosauria</taxon>
        <taxon>Aves</taxon>
        <taxon>Neognathae</taxon>
        <taxon>Galloanserae</taxon>
        <taxon>Galliformes</taxon>
        <taxon>Phasianidae</taxon>
        <taxon>Phasianinae</taxon>
        <taxon>Gallus</taxon>
    </lineage>
</organism>
<dbReference type="EC" id="2.7.11.17"/>
<dbReference type="EMBL" id="AJ720104">
    <property type="protein sequence ID" value="CAG31763.1"/>
    <property type="molecule type" value="mRNA"/>
</dbReference>
<dbReference type="RefSeq" id="NP_001034389.1">
    <property type="nucleotide sequence ID" value="NM_001039300.1"/>
</dbReference>
<dbReference type="SMR" id="Q5ZKI0"/>
<dbReference type="FunCoup" id="Q5ZKI0">
    <property type="interactions" value="1247"/>
</dbReference>
<dbReference type="STRING" id="9031.ENSGALP00000073323"/>
<dbReference type="GlyGen" id="Q5ZKI0">
    <property type="glycosylation" value="1 site"/>
</dbReference>
<dbReference type="PaxDb" id="9031-ENSGALP00000019616"/>
<dbReference type="GeneID" id="422688"/>
<dbReference type="KEGG" id="gga:422688"/>
<dbReference type="CTD" id="817"/>
<dbReference type="VEuPathDB" id="HostDB:geneid_422688"/>
<dbReference type="eggNOG" id="KOG0033">
    <property type="taxonomic scope" value="Eukaryota"/>
</dbReference>
<dbReference type="InParanoid" id="Q5ZKI0"/>
<dbReference type="OrthoDB" id="336747at2759"/>
<dbReference type="PhylomeDB" id="Q5ZKI0"/>
<dbReference type="PRO" id="PR:Q5ZKI0"/>
<dbReference type="Proteomes" id="UP000000539">
    <property type="component" value="Unassembled WGS sequence"/>
</dbReference>
<dbReference type="GO" id="GO:0005737">
    <property type="term" value="C:cytoplasm"/>
    <property type="evidence" value="ECO:0000318"/>
    <property type="project" value="GO_Central"/>
</dbReference>
<dbReference type="GO" id="GO:0043005">
    <property type="term" value="C:neuron projection"/>
    <property type="evidence" value="ECO:0000318"/>
    <property type="project" value="GO_Central"/>
</dbReference>
<dbReference type="GO" id="GO:0014069">
    <property type="term" value="C:postsynaptic density"/>
    <property type="evidence" value="ECO:0000318"/>
    <property type="project" value="GO_Central"/>
</dbReference>
<dbReference type="GO" id="GO:0005524">
    <property type="term" value="F:ATP binding"/>
    <property type="evidence" value="ECO:0007669"/>
    <property type="project" value="UniProtKB-KW"/>
</dbReference>
<dbReference type="GO" id="GO:0004683">
    <property type="term" value="F:calcium/calmodulin-dependent protein kinase activity"/>
    <property type="evidence" value="ECO:0000318"/>
    <property type="project" value="GO_Central"/>
</dbReference>
<dbReference type="GO" id="GO:0005516">
    <property type="term" value="F:calmodulin binding"/>
    <property type="evidence" value="ECO:0000318"/>
    <property type="project" value="GO_Central"/>
</dbReference>
<dbReference type="GO" id="GO:0106310">
    <property type="term" value="F:protein serine kinase activity"/>
    <property type="evidence" value="ECO:0007669"/>
    <property type="project" value="RHEA"/>
</dbReference>
<dbReference type="GO" id="GO:0048168">
    <property type="term" value="P:regulation of neuronal synaptic plasticity"/>
    <property type="evidence" value="ECO:0000318"/>
    <property type="project" value="GO_Central"/>
</dbReference>
<dbReference type="GO" id="GO:1903076">
    <property type="term" value="P:regulation of protein localization to plasma membrane"/>
    <property type="evidence" value="ECO:0000318"/>
    <property type="project" value="GO_Central"/>
</dbReference>
<dbReference type="CDD" id="cd14086">
    <property type="entry name" value="STKc_CaMKII"/>
    <property type="match status" value="1"/>
</dbReference>
<dbReference type="FunFam" id="1.10.510.10:FF:000001">
    <property type="entry name" value="Calcium/calmodulin-dependent protein kinase type II subunit delta"/>
    <property type="match status" value="1"/>
</dbReference>
<dbReference type="FunFam" id="3.30.200.20:FF:000002">
    <property type="entry name" value="Calcium/calmodulin-dependent protein kinase type II subunit delta isoform 2"/>
    <property type="match status" value="1"/>
</dbReference>
<dbReference type="FunFam" id="3.10.450.50:FF:000001">
    <property type="entry name" value="calcium/calmodulin-dependent protein kinase type II subunit gamma isoform X1"/>
    <property type="match status" value="1"/>
</dbReference>
<dbReference type="Gene3D" id="3.10.450.50">
    <property type="match status" value="1"/>
</dbReference>
<dbReference type="Gene3D" id="6.10.140.620">
    <property type="match status" value="1"/>
</dbReference>
<dbReference type="Gene3D" id="3.30.200.20">
    <property type="entry name" value="Phosphorylase Kinase, domain 1"/>
    <property type="match status" value="1"/>
</dbReference>
<dbReference type="Gene3D" id="1.10.510.10">
    <property type="entry name" value="Transferase(Phosphotransferase) domain 1"/>
    <property type="match status" value="1"/>
</dbReference>
<dbReference type="InterPro" id="IPR013543">
    <property type="entry name" value="Ca/CaM-dep_prot_kinase-assoc"/>
</dbReference>
<dbReference type="InterPro" id="IPR011009">
    <property type="entry name" value="Kinase-like_dom_sf"/>
</dbReference>
<dbReference type="InterPro" id="IPR032710">
    <property type="entry name" value="NTF2-like_dom_sf"/>
</dbReference>
<dbReference type="InterPro" id="IPR000719">
    <property type="entry name" value="Prot_kinase_dom"/>
</dbReference>
<dbReference type="InterPro" id="IPR017441">
    <property type="entry name" value="Protein_kinase_ATP_BS"/>
</dbReference>
<dbReference type="InterPro" id="IPR008271">
    <property type="entry name" value="Ser/Thr_kinase_AS"/>
</dbReference>
<dbReference type="PANTHER" id="PTHR24347">
    <property type="entry name" value="SERINE/THREONINE-PROTEIN KINASE"/>
    <property type="match status" value="1"/>
</dbReference>
<dbReference type="Pfam" id="PF08332">
    <property type="entry name" value="CaMKII_AD"/>
    <property type="match status" value="1"/>
</dbReference>
<dbReference type="Pfam" id="PF00069">
    <property type="entry name" value="Pkinase"/>
    <property type="match status" value="1"/>
</dbReference>
<dbReference type="SMART" id="SM00220">
    <property type="entry name" value="S_TKc"/>
    <property type="match status" value="1"/>
</dbReference>
<dbReference type="SUPFAM" id="SSF54427">
    <property type="entry name" value="NTF2-like"/>
    <property type="match status" value="1"/>
</dbReference>
<dbReference type="SUPFAM" id="SSF56112">
    <property type="entry name" value="Protein kinase-like (PK-like)"/>
    <property type="match status" value="1"/>
</dbReference>
<dbReference type="PROSITE" id="PS00107">
    <property type="entry name" value="PROTEIN_KINASE_ATP"/>
    <property type="match status" value="1"/>
</dbReference>
<dbReference type="PROSITE" id="PS50011">
    <property type="entry name" value="PROTEIN_KINASE_DOM"/>
    <property type="match status" value="1"/>
</dbReference>
<dbReference type="PROSITE" id="PS00108">
    <property type="entry name" value="PROTEIN_KINASE_ST"/>
    <property type="match status" value="1"/>
</dbReference>
<comment type="function">
    <text evidence="1">CaM-kinase II (CAMK2) is a prominent kinase in the central nervous system.</text>
</comment>
<comment type="catalytic activity">
    <reaction>
        <text>L-seryl-[protein] + ATP = O-phospho-L-seryl-[protein] + ADP + H(+)</text>
        <dbReference type="Rhea" id="RHEA:17989"/>
        <dbReference type="Rhea" id="RHEA-COMP:9863"/>
        <dbReference type="Rhea" id="RHEA-COMP:11604"/>
        <dbReference type="ChEBI" id="CHEBI:15378"/>
        <dbReference type="ChEBI" id="CHEBI:29999"/>
        <dbReference type="ChEBI" id="CHEBI:30616"/>
        <dbReference type="ChEBI" id="CHEBI:83421"/>
        <dbReference type="ChEBI" id="CHEBI:456216"/>
        <dbReference type="EC" id="2.7.11.17"/>
    </reaction>
</comment>
<comment type="catalytic activity">
    <reaction>
        <text>L-threonyl-[protein] + ATP = O-phospho-L-threonyl-[protein] + ADP + H(+)</text>
        <dbReference type="Rhea" id="RHEA:46608"/>
        <dbReference type="Rhea" id="RHEA-COMP:11060"/>
        <dbReference type="Rhea" id="RHEA-COMP:11605"/>
        <dbReference type="ChEBI" id="CHEBI:15378"/>
        <dbReference type="ChEBI" id="CHEBI:30013"/>
        <dbReference type="ChEBI" id="CHEBI:30616"/>
        <dbReference type="ChEBI" id="CHEBI:61977"/>
        <dbReference type="ChEBI" id="CHEBI:456216"/>
        <dbReference type="EC" id="2.7.11.17"/>
    </reaction>
</comment>
<comment type="activity regulation">
    <text evidence="1">Autophosphorylation of CAMK2 plays an important role in the regulation of the kinase activity.</text>
</comment>
<comment type="subunit">
    <text evidence="1">CAMK2 is composed of four different chains: alpha, beta, gamma, and delta. The different isoforms assemble into homo- or heteromultimeric holoenzymes composed of 8 to 12 subunits (By similarity).</text>
</comment>
<comment type="similarity">
    <text evidence="4">Belongs to the protein kinase superfamily. CAMK Ser/Thr protein kinase family. CaMK subfamily.</text>
</comment>
<accession>Q5ZKI0</accession>
<protein>
    <recommendedName>
        <fullName>Calcium/calmodulin-dependent protein kinase type II delta chain</fullName>
        <shortName>CaM kinase II subunit delta</shortName>
        <shortName>CaM-kinase II delta chain</shortName>
        <shortName>CaMK-II subunit delta</shortName>
        <ecNumber>2.7.11.17</ecNumber>
    </recommendedName>
</protein>
<name>KCC2D_CHICK</name>
<evidence type="ECO:0000250" key="1"/>
<evidence type="ECO:0000255" key="2">
    <source>
        <dbReference type="PROSITE-ProRule" id="PRU00159"/>
    </source>
</evidence>
<evidence type="ECO:0000255" key="3">
    <source>
        <dbReference type="PROSITE-ProRule" id="PRU10027"/>
    </source>
</evidence>
<evidence type="ECO:0000305" key="4"/>
<feature type="chain" id="PRO_0000277820" description="Calcium/calmodulin-dependent protein kinase type II delta chain">
    <location>
        <begin position="1"/>
        <end position="479"/>
    </location>
</feature>
<feature type="domain" description="Protein kinase" evidence="2">
    <location>
        <begin position="14"/>
        <end position="272"/>
    </location>
</feature>
<feature type="active site" description="Proton acceptor" evidence="2 3">
    <location>
        <position position="136"/>
    </location>
</feature>
<feature type="binding site" evidence="2">
    <location>
        <begin position="20"/>
        <end position="28"/>
    </location>
    <ligand>
        <name>ATP</name>
        <dbReference type="ChEBI" id="CHEBI:30616"/>
    </ligand>
</feature>
<feature type="binding site" evidence="2">
    <location>
        <position position="43"/>
    </location>
    <ligand>
        <name>ATP</name>
        <dbReference type="ChEBI" id="CHEBI:30616"/>
    </ligand>
</feature>
<feature type="modified residue" description="Phosphothreonine" evidence="1">
    <location>
        <position position="287"/>
    </location>
</feature>
<feature type="modified residue" description="Phosphoserine" evidence="1">
    <location>
        <position position="315"/>
    </location>
</feature>
<feature type="modified residue" description="Phosphoserine" evidence="1">
    <location>
        <position position="319"/>
    </location>
</feature>
<feature type="modified residue" description="Phosphothreonine" evidence="1">
    <location>
        <position position="337"/>
    </location>
</feature>
<reference key="1">
    <citation type="journal article" date="2005" name="Genome Biol.">
        <title>Full-length cDNAs from chicken bursal lymphocytes to facilitate gene function analysis.</title>
        <authorList>
            <person name="Caldwell R.B."/>
            <person name="Kierzek A.M."/>
            <person name="Arakawa H."/>
            <person name="Bezzubov Y."/>
            <person name="Zaim J."/>
            <person name="Fiedler P."/>
            <person name="Kutter S."/>
            <person name="Blagodatski A."/>
            <person name="Kostovska D."/>
            <person name="Koter M."/>
            <person name="Plachy J."/>
            <person name="Carninci P."/>
            <person name="Hayashizaki Y."/>
            <person name="Buerstedde J.-M."/>
        </authorList>
    </citation>
    <scope>NUCLEOTIDE SEQUENCE [LARGE SCALE MRNA]</scope>
    <source>
        <strain>CB</strain>
        <tissue>Bursa of Fabricius</tissue>
    </source>
</reference>